<feature type="chain" id="PRO_0000346196" description="D-ribose pyranase">
    <location>
        <begin position="1"/>
        <end position="139"/>
    </location>
</feature>
<feature type="active site" description="Proton donor" evidence="1">
    <location>
        <position position="20"/>
    </location>
</feature>
<feature type="binding site" evidence="1">
    <location>
        <position position="28"/>
    </location>
    <ligand>
        <name>substrate</name>
    </ligand>
</feature>
<feature type="binding site" evidence="1">
    <location>
        <position position="106"/>
    </location>
    <ligand>
        <name>substrate</name>
    </ligand>
</feature>
<feature type="binding site" evidence="1">
    <location>
        <begin position="128"/>
        <end position="130"/>
    </location>
    <ligand>
        <name>substrate</name>
    </ligand>
</feature>
<evidence type="ECO:0000255" key="1">
    <source>
        <dbReference type="HAMAP-Rule" id="MF_01661"/>
    </source>
</evidence>
<proteinExistence type="inferred from homology"/>
<sequence>MKKGTVLNSDISSVISRLGHTDTLVVCDAGLPIPKSTTRIDMALTQGVPSFMQVLGVVTNEMQVEAAIIAEEIKQHNPQLHETLLTHLEQLQKHQGNTIEIRYTTHEQFKQQTAESQAVIRSGECSPYANIILCAGVTF</sequence>
<organism>
    <name type="scientific">Escherichia coli (strain ATCC 8739 / DSM 1576 / NBRC 3972 / NCIMB 8545 / WDCM 00012 / Crooks)</name>
    <dbReference type="NCBI Taxonomy" id="481805"/>
    <lineage>
        <taxon>Bacteria</taxon>
        <taxon>Pseudomonadati</taxon>
        <taxon>Pseudomonadota</taxon>
        <taxon>Gammaproteobacteria</taxon>
        <taxon>Enterobacterales</taxon>
        <taxon>Enterobacteriaceae</taxon>
        <taxon>Escherichia</taxon>
    </lineage>
</organism>
<comment type="function">
    <text evidence="1">Catalyzes the interconversion of beta-pyran and beta-furan forms of D-ribose.</text>
</comment>
<comment type="catalytic activity">
    <reaction evidence="1">
        <text>beta-D-ribopyranose = beta-D-ribofuranose</text>
        <dbReference type="Rhea" id="RHEA:25432"/>
        <dbReference type="ChEBI" id="CHEBI:27476"/>
        <dbReference type="ChEBI" id="CHEBI:47002"/>
        <dbReference type="EC" id="5.4.99.62"/>
    </reaction>
</comment>
<comment type="pathway">
    <text evidence="1">Carbohydrate metabolism; D-ribose degradation; D-ribose 5-phosphate from beta-D-ribopyranose: step 1/2.</text>
</comment>
<comment type="subunit">
    <text evidence="1">Homodecamer.</text>
</comment>
<comment type="subcellular location">
    <subcellularLocation>
        <location evidence="1">Cytoplasm</location>
    </subcellularLocation>
</comment>
<comment type="similarity">
    <text evidence="1">Belongs to the RbsD / FucU family. RbsD subfamily.</text>
</comment>
<name>RBSD_ECOLC</name>
<accession>B1IWZ0</accession>
<keyword id="KW-0119">Carbohydrate metabolism</keyword>
<keyword id="KW-0963">Cytoplasm</keyword>
<keyword id="KW-0413">Isomerase</keyword>
<protein>
    <recommendedName>
        <fullName evidence="1">D-ribose pyranase</fullName>
        <ecNumber evidence="1">5.4.99.62</ecNumber>
    </recommendedName>
</protein>
<reference key="1">
    <citation type="submission" date="2008-02" db="EMBL/GenBank/DDBJ databases">
        <title>Complete sequence of Escherichia coli C str. ATCC 8739.</title>
        <authorList>
            <person name="Copeland A."/>
            <person name="Lucas S."/>
            <person name="Lapidus A."/>
            <person name="Glavina del Rio T."/>
            <person name="Dalin E."/>
            <person name="Tice H."/>
            <person name="Bruce D."/>
            <person name="Goodwin L."/>
            <person name="Pitluck S."/>
            <person name="Kiss H."/>
            <person name="Brettin T."/>
            <person name="Detter J.C."/>
            <person name="Han C."/>
            <person name="Kuske C.R."/>
            <person name="Schmutz J."/>
            <person name="Larimer F."/>
            <person name="Land M."/>
            <person name="Hauser L."/>
            <person name="Kyrpides N."/>
            <person name="Mikhailova N."/>
            <person name="Ingram L."/>
            <person name="Richardson P."/>
        </authorList>
    </citation>
    <scope>NUCLEOTIDE SEQUENCE [LARGE SCALE GENOMIC DNA]</scope>
    <source>
        <strain>ATCC 8739 / DSM 1576 / NBRC 3972 / NCIMB 8545 / WDCM 00012 / Crooks</strain>
    </source>
</reference>
<gene>
    <name evidence="1" type="primary">rbsD</name>
    <name type="ordered locus">EcolC_4246</name>
</gene>
<dbReference type="EC" id="5.4.99.62" evidence="1"/>
<dbReference type="EMBL" id="CP000946">
    <property type="protein sequence ID" value="ACA79842.1"/>
    <property type="molecule type" value="Genomic_DNA"/>
</dbReference>
<dbReference type="RefSeq" id="WP_000715936.1">
    <property type="nucleotide sequence ID" value="NZ_MTFT01000013.1"/>
</dbReference>
<dbReference type="SMR" id="B1IWZ0"/>
<dbReference type="GeneID" id="93778201"/>
<dbReference type="KEGG" id="ecl:EcolC_4246"/>
<dbReference type="HOGENOM" id="CLU_135498_0_0_6"/>
<dbReference type="UniPathway" id="UPA00916">
    <property type="reaction ID" value="UER00888"/>
</dbReference>
<dbReference type="GO" id="GO:0005829">
    <property type="term" value="C:cytosol"/>
    <property type="evidence" value="ECO:0007669"/>
    <property type="project" value="TreeGrafter"/>
</dbReference>
<dbReference type="GO" id="GO:0062193">
    <property type="term" value="F:D-ribose pyranase activity"/>
    <property type="evidence" value="ECO:0007669"/>
    <property type="project" value="UniProtKB-EC"/>
</dbReference>
<dbReference type="GO" id="GO:0016872">
    <property type="term" value="F:intramolecular lyase activity"/>
    <property type="evidence" value="ECO:0007669"/>
    <property type="project" value="UniProtKB-UniRule"/>
</dbReference>
<dbReference type="GO" id="GO:0048029">
    <property type="term" value="F:monosaccharide binding"/>
    <property type="evidence" value="ECO:0007669"/>
    <property type="project" value="InterPro"/>
</dbReference>
<dbReference type="GO" id="GO:0019303">
    <property type="term" value="P:D-ribose catabolic process"/>
    <property type="evidence" value="ECO:0007669"/>
    <property type="project" value="UniProtKB-UniRule"/>
</dbReference>
<dbReference type="FunFam" id="3.40.1650.10:FF:000002">
    <property type="entry name" value="D-ribose pyranase"/>
    <property type="match status" value="1"/>
</dbReference>
<dbReference type="Gene3D" id="3.40.1650.10">
    <property type="entry name" value="RbsD-like domain"/>
    <property type="match status" value="1"/>
</dbReference>
<dbReference type="HAMAP" id="MF_01661">
    <property type="entry name" value="D_rib_pyranase"/>
    <property type="match status" value="1"/>
</dbReference>
<dbReference type="InterPro" id="IPR023064">
    <property type="entry name" value="D-ribose_pyranase"/>
</dbReference>
<dbReference type="InterPro" id="IPR023750">
    <property type="entry name" value="RbsD-like_sf"/>
</dbReference>
<dbReference type="InterPro" id="IPR007721">
    <property type="entry name" value="RbsD_FucU"/>
</dbReference>
<dbReference type="NCBIfam" id="NF008761">
    <property type="entry name" value="PRK11797.1"/>
    <property type="match status" value="1"/>
</dbReference>
<dbReference type="PANTHER" id="PTHR37831">
    <property type="entry name" value="D-RIBOSE PYRANASE"/>
    <property type="match status" value="1"/>
</dbReference>
<dbReference type="PANTHER" id="PTHR37831:SF1">
    <property type="entry name" value="D-RIBOSE PYRANASE"/>
    <property type="match status" value="1"/>
</dbReference>
<dbReference type="Pfam" id="PF05025">
    <property type="entry name" value="RbsD_FucU"/>
    <property type="match status" value="1"/>
</dbReference>
<dbReference type="SUPFAM" id="SSF102546">
    <property type="entry name" value="RbsD-like"/>
    <property type="match status" value="1"/>
</dbReference>